<gene>
    <name evidence="1" type="primary">lolA</name>
    <name type="ordered locus">Rfer_3177</name>
</gene>
<reference key="1">
    <citation type="submission" date="2006-02" db="EMBL/GenBank/DDBJ databases">
        <title>Complete sequence of chromosome of Rhodoferax ferrireducens DSM 15236.</title>
        <authorList>
            <person name="Copeland A."/>
            <person name="Lucas S."/>
            <person name="Lapidus A."/>
            <person name="Barry K."/>
            <person name="Detter J.C."/>
            <person name="Glavina del Rio T."/>
            <person name="Hammon N."/>
            <person name="Israni S."/>
            <person name="Pitluck S."/>
            <person name="Brettin T."/>
            <person name="Bruce D."/>
            <person name="Han C."/>
            <person name="Tapia R."/>
            <person name="Gilna P."/>
            <person name="Kiss H."/>
            <person name="Schmutz J."/>
            <person name="Larimer F."/>
            <person name="Land M."/>
            <person name="Kyrpides N."/>
            <person name="Ivanova N."/>
            <person name="Richardson P."/>
        </authorList>
    </citation>
    <scope>NUCLEOTIDE SEQUENCE [LARGE SCALE GENOMIC DNA]</scope>
    <source>
        <strain>ATCC BAA-621 / DSM 15236 / T118</strain>
    </source>
</reference>
<evidence type="ECO:0000255" key="1">
    <source>
        <dbReference type="HAMAP-Rule" id="MF_00240"/>
    </source>
</evidence>
<protein>
    <recommendedName>
        <fullName evidence="1">Outer-membrane lipoprotein carrier protein</fullName>
    </recommendedName>
</protein>
<dbReference type="EMBL" id="CP000267">
    <property type="protein sequence ID" value="ABD70886.1"/>
    <property type="molecule type" value="Genomic_DNA"/>
</dbReference>
<dbReference type="RefSeq" id="WP_011465449.1">
    <property type="nucleotide sequence ID" value="NC_007908.1"/>
</dbReference>
<dbReference type="SMR" id="Q21TL7"/>
<dbReference type="STRING" id="338969.Rfer_3177"/>
<dbReference type="KEGG" id="rfr:Rfer_3177"/>
<dbReference type="eggNOG" id="COG2834">
    <property type="taxonomic scope" value="Bacteria"/>
</dbReference>
<dbReference type="HOGENOM" id="CLU_087560_0_1_4"/>
<dbReference type="OrthoDB" id="9787361at2"/>
<dbReference type="Proteomes" id="UP000008332">
    <property type="component" value="Chromosome"/>
</dbReference>
<dbReference type="GO" id="GO:0042597">
    <property type="term" value="C:periplasmic space"/>
    <property type="evidence" value="ECO:0007669"/>
    <property type="project" value="UniProtKB-SubCell"/>
</dbReference>
<dbReference type="GO" id="GO:0044874">
    <property type="term" value="P:lipoprotein localization to outer membrane"/>
    <property type="evidence" value="ECO:0007669"/>
    <property type="project" value="UniProtKB-UniRule"/>
</dbReference>
<dbReference type="GO" id="GO:0042953">
    <property type="term" value="P:lipoprotein transport"/>
    <property type="evidence" value="ECO:0007669"/>
    <property type="project" value="InterPro"/>
</dbReference>
<dbReference type="CDD" id="cd16325">
    <property type="entry name" value="LolA"/>
    <property type="match status" value="1"/>
</dbReference>
<dbReference type="Gene3D" id="2.50.20.10">
    <property type="entry name" value="Lipoprotein localisation LolA/LolB/LppX"/>
    <property type="match status" value="1"/>
</dbReference>
<dbReference type="HAMAP" id="MF_00240">
    <property type="entry name" value="LolA"/>
    <property type="match status" value="1"/>
</dbReference>
<dbReference type="InterPro" id="IPR029046">
    <property type="entry name" value="LolA/LolB/LppX"/>
</dbReference>
<dbReference type="InterPro" id="IPR004564">
    <property type="entry name" value="OM_lipoprot_carrier_LolA-like"/>
</dbReference>
<dbReference type="InterPro" id="IPR018323">
    <property type="entry name" value="OM_lipoprot_carrier_LolA_Pbac"/>
</dbReference>
<dbReference type="NCBIfam" id="TIGR00547">
    <property type="entry name" value="lolA"/>
    <property type="match status" value="1"/>
</dbReference>
<dbReference type="PANTHER" id="PTHR35869">
    <property type="entry name" value="OUTER-MEMBRANE LIPOPROTEIN CARRIER PROTEIN"/>
    <property type="match status" value="1"/>
</dbReference>
<dbReference type="PANTHER" id="PTHR35869:SF1">
    <property type="entry name" value="OUTER-MEMBRANE LIPOPROTEIN CARRIER PROTEIN"/>
    <property type="match status" value="1"/>
</dbReference>
<dbReference type="Pfam" id="PF03548">
    <property type="entry name" value="LolA"/>
    <property type="match status" value="1"/>
</dbReference>
<dbReference type="SUPFAM" id="SSF89392">
    <property type="entry name" value="Prokaryotic lipoproteins and lipoprotein localization factors"/>
    <property type="match status" value="1"/>
</dbReference>
<proteinExistence type="inferred from homology"/>
<keyword id="KW-0143">Chaperone</keyword>
<keyword id="KW-0574">Periplasm</keyword>
<keyword id="KW-0653">Protein transport</keyword>
<keyword id="KW-1185">Reference proteome</keyword>
<keyword id="KW-0732">Signal</keyword>
<keyword id="KW-0813">Transport</keyword>
<sequence length="213" mass="22832">MKYFATICIAAYAGLAGAGGLKSLEVFVKTVNTGRADFTQVVTAPAKAGQAPRVKTSSGTFEFSRPNRFKFVYKKPFEQNIVADGQTLWLYDVDLNQVTARQQSKVLGSTPAALIAAAPDLRALQADFTLADAPDKDGLQWAAATPKSKDGQLQSVRVGFRAGEQAAELAALEILDSFGQRSVLSFSRFEVNPALPGNSFQFKPPAGADVIRQ</sequence>
<comment type="function">
    <text evidence="1">Participates in the translocation of lipoproteins from the inner membrane to the outer membrane. Only forms a complex with a lipoprotein if the residue after the N-terminal Cys is not an aspartate (The Asp acts as a targeting signal to indicate that the lipoprotein should stay in the inner membrane).</text>
</comment>
<comment type="subunit">
    <text evidence="1">Monomer.</text>
</comment>
<comment type="subcellular location">
    <subcellularLocation>
        <location evidence="1">Periplasm</location>
    </subcellularLocation>
</comment>
<comment type="similarity">
    <text evidence="1">Belongs to the LolA family.</text>
</comment>
<organism>
    <name type="scientific">Albidiferax ferrireducens (strain ATCC BAA-621 / DSM 15236 / T118)</name>
    <name type="common">Rhodoferax ferrireducens</name>
    <dbReference type="NCBI Taxonomy" id="338969"/>
    <lineage>
        <taxon>Bacteria</taxon>
        <taxon>Pseudomonadati</taxon>
        <taxon>Pseudomonadota</taxon>
        <taxon>Betaproteobacteria</taxon>
        <taxon>Burkholderiales</taxon>
        <taxon>Comamonadaceae</taxon>
        <taxon>Rhodoferax</taxon>
    </lineage>
</organism>
<accession>Q21TL7</accession>
<feature type="signal peptide" evidence="1">
    <location>
        <begin position="1"/>
        <end position="18"/>
    </location>
</feature>
<feature type="chain" id="PRO_5000110639" description="Outer-membrane lipoprotein carrier protein">
    <location>
        <begin position="19"/>
        <end position="213"/>
    </location>
</feature>
<name>LOLA_ALBFT</name>